<sequence length="807" mass="91138">MSTGHTIYHSLLKLPLSVMVKSSSIPSNPIEDLKIDLERPIIYALPFRSHVDLLTLQKSALELGLPDPLSPIEIEGVKYPRYVFTSIGPKMFDTDDDLPQESLDLFKIVLKHHADNPDADFQLIPTSILWGRKPGKEGTSKPHLMPLNGPQKFVTLIKAGRDSTVRISPVVSLRYMADNHGSDEAIAHKLARVAKIHFSRQKLAASGPNLPNRQALFNRLLKSQAIEKVILEEAKSRNVDVEKVRKEAMGIMEEIATNFSYSLIKNGNRILKWLWNRLYQGLNINNASTVRKLAQEGHEIVYVPCHRSHMDYLLLSYVLYHEGLVPPHIAAGINLNFFPAGPIFRRGGAFFIRRSFKGNRLYSTIFREYLAELFAKGYSVEYFSEGGRSRTGRLLQAKTGMLAMTVQAMLRGLNRPVTLVPVYIGYEHVMEVTTYAKELRGKRKEKENAGQVLRTLRKLRNFGQGYVNFGEPISLNHYLNEHAPNWSESINPIEPQKPEWMTPVVNGIANKMMTHINDAAAANALTLCATALLAANQRALSKEDLTEQLDCYLQILRNVPYSATATVPSEDADALLEHAIKLDKFVIEKDTLGEIVSLDRNQSLLMTYYRNNIIHLFALPSLIAKLVVHHDTITVEQIQDQIKLIYPFLKAELFLHYKEEELTSIVNNHIDELVQQNLILRDGDTLQLCNANIRKLHLLAHTISETLQRYAIALTHLQASPDLGKDELEEQSQIMAQRLSRLHGINAPEFFDKGVFCILFNTLKTEGYLDEDGAAVLSKVEPLSQDIAHLLTPEIKLTIHAVMTKED</sequence>
<feature type="chain" id="PRO_1000049469" description="Glycerol-3-phosphate acyltransferase">
    <location>
        <begin position="1"/>
        <end position="807"/>
    </location>
</feature>
<feature type="short sequence motif" description="HXXXXD motif">
    <location>
        <begin position="305"/>
        <end position="310"/>
    </location>
</feature>
<dbReference type="EC" id="2.3.1.15" evidence="1"/>
<dbReference type="EMBL" id="CP000020">
    <property type="protein sequence ID" value="AAW86938.1"/>
    <property type="molecule type" value="Genomic_DNA"/>
</dbReference>
<dbReference type="RefSeq" id="WP_011262810.1">
    <property type="nucleotide sequence ID" value="NC_006840.2"/>
</dbReference>
<dbReference type="RefSeq" id="YP_205826.1">
    <property type="nucleotide sequence ID" value="NC_006840.2"/>
</dbReference>
<dbReference type="SMR" id="Q5E208"/>
<dbReference type="STRING" id="312309.VF_2443"/>
<dbReference type="EnsemblBacteria" id="AAW86938">
    <property type="protein sequence ID" value="AAW86938"/>
    <property type="gene ID" value="VF_2443"/>
</dbReference>
<dbReference type="GeneID" id="54165174"/>
<dbReference type="KEGG" id="vfi:VF_2443"/>
<dbReference type="PATRIC" id="fig|312309.11.peg.2471"/>
<dbReference type="eggNOG" id="COG2937">
    <property type="taxonomic scope" value="Bacteria"/>
</dbReference>
<dbReference type="HOGENOM" id="CLU_015407_0_0_6"/>
<dbReference type="OrthoDB" id="335193at2"/>
<dbReference type="UniPathway" id="UPA00557">
    <property type="reaction ID" value="UER00612"/>
</dbReference>
<dbReference type="Proteomes" id="UP000000537">
    <property type="component" value="Chromosome I"/>
</dbReference>
<dbReference type="GO" id="GO:0005886">
    <property type="term" value="C:plasma membrane"/>
    <property type="evidence" value="ECO:0007669"/>
    <property type="project" value="UniProtKB-SubCell"/>
</dbReference>
<dbReference type="GO" id="GO:0004366">
    <property type="term" value="F:glycerol-3-phosphate O-acyltransferase activity"/>
    <property type="evidence" value="ECO:0007669"/>
    <property type="project" value="UniProtKB-UniRule"/>
</dbReference>
<dbReference type="GO" id="GO:0016024">
    <property type="term" value="P:CDP-diacylglycerol biosynthetic process"/>
    <property type="evidence" value="ECO:0007669"/>
    <property type="project" value="UniProtKB-UniRule"/>
</dbReference>
<dbReference type="GO" id="GO:0006631">
    <property type="term" value="P:fatty acid metabolic process"/>
    <property type="evidence" value="ECO:0007669"/>
    <property type="project" value="TreeGrafter"/>
</dbReference>
<dbReference type="CDD" id="cd07993">
    <property type="entry name" value="LPLAT_DHAPAT-like"/>
    <property type="match status" value="1"/>
</dbReference>
<dbReference type="HAMAP" id="MF_00393">
    <property type="entry name" value="Glyc3P_acyltrans"/>
    <property type="match status" value="1"/>
</dbReference>
<dbReference type="InterPro" id="IPR022284">
    <property type="entry name" value="GPAT/DHAPAT"/>
</dbReference>
<dbReference type="InterPro" id="IPR045520">
    <property type="entry name" value="GPAT/DHAPAT_C"/>
</dbReference>
<dbReference type="InterPro" id="IPR041728">
    <property type="entry name" value="GPAT/DHAPAT_LPLAT"/>
</dbReference>
<dbReference type="InterPro" id="IPR028354">
    <property type="entry name" value="GPAT_PlsB"/>
</dbReference>
<dbReference type="InterPro" id="IPR002123">
    <property type="entry name" value="Plipid/glycerol_acylTrfase"/>
</dbReference>
<dbReference type="NCBIfam" id="TIGR03703">
    <property type="entry name" value="plsB"/>
    <property type="match status" value="1"/>
</dbReference>
<dbReference type="NCBIfam" id="NF003441">
    <property type="entry name" value="PRK04974.1"/>
    <property type="match status" value="1"/>
</dbReference>
<dbReference type="PANTHER" id="PTHR12563:SF17">
    <property type="entry name" value="DIHYDROXYACETONE PHOSPHATE ACYLTRANSFERASE"/>
    <property type="match status" value="1"/>
</dbReference>
<dbReference type="PANTHER" id="PTHR12563">
    <property type="entry name" value="GLYCEROL-3-PHOSPHATE ACYLTRANSFERASE"/>
    <property type="match status" value="1"/>
</dbReference>
<dbReference type="Pfam" id="PF01553">
    <property type="entry name" value="Acyltransferase"/>
    <property type="match status" value="1"/>
</dbReference>
<dbReference type="Pfam" id="PF19277">
    <property type="entry name" value="GPAT_C"/>
    <property type="match status" value="1"/>
</dbReference>
<dbReference type="PIRSF" id="PIRSF500064">
    <property type="entry name" value="GPAT"/>
    <property type="match status" value="1"/>
</dbReference>
<dbReference type="PIRSF" id="PIRSF000437">
    <property type="entry name" value="GPAT_DHAPAT"/>
    <property type="match status" value="1"/>
</dbReference>
<dbReference type="SMART" id="SM00563">
    <property type="entry name" value="PlsC"/>
    <property type="match status" value="1"/>
</dbReference>
<dbReference type="SUPFAM" id="SSF69593">
    <property type="entry name" value="Glycerol-3-phosphate (1)-acyltransferase"/>
    <property type="match status" value="1"/>
</dbReference>
<evidence type="ECO:0000255" key="1">
    <source>
        <dbReference type="HAMAP-Rule" id="MF_00393"/>
    </source>
</evidence>
<organism>
    <name type="scientific">Aliivibrio fischeri (strain ATCC 700601 / ES114)</name>
    <name type="common">Vibrio fischeri</name>
    <dbReference type="NCBI Taxonomy" id="312309"/>
    <lineage>
        <taxon>Bacteria</taxon>
        <taxon>Pseudomonadati</taxon>
        <taxon>Pseudomonadota</taxon>
        <taxon>Gammaproteobacteria</taxon>
        <taxon>Vibrionales</taxon>
        <taxon>Vibrionaceae</taxon>
        <taxon>Aliivibrio</taxon>
    </lineage>
</organism>
<comment type="catalytic activity">
    <reaction evidence="1">
        <text>sn-glycerol 3-phosphate + an acyl-CoA = a 1-acyl-sn-glycero-3-phosphate + CoA</text>
        <dbReference type="Rhea" id="RHEA:15325"/>
        <dbReference type="ChEBI" id="CHEBI:57287"/>
        <dbReference type="ChEBI" id="CHEBI:57597"/>
        <dbReference type="ChEBI" id="CHEBI:57970"/>
        <dbReference type="ChEBI" id="CHEBI:58342"/>
        <dbReference type="EC" id="2.3.1.15"/>
    </reaction>
</comment>
<comment type="pathway">
    <text evidence="1">Phospholipid metabolism; CDP-diacylglycerol biosynthesis; CDP-diacylglycerol from sn-glycerol 3-phosphate: step 1/3.</text>
</comment>
<comment type="subcellular location">
    <subcellularLocation>
        <location evidence="1">Cell inner membrane</location>
        <topology evidence="1">Peripheral membrane protein</topology>
        <orientation evidence="1">Cytoplasmic side</orientation>
    </subcellularLocation>
</comment>
<comment type="domain">
    <text evidence="1">The HXXXXD motif is essential for acyltransferase activity and may constitute the binding site for the phosphate moiety of the glycerol-3-phosphate.</text>
</comment>
<comment type="similarity">
    <text evidence="1">Belongs to the GPAT/DAPAT family.</text>
</comment>
<accession>Q5E208</accession>
<gene>
    <name evidence="1" type="primary">plsB</name>
    <name type="ordered locus">VF_2443</name>
</gene>
<proteinExistence type="inferred from homology"/>
<name>PLSB_ALIF1</name>
<protein>
    <recommendedName>
        <fullName evidence="1">Glycerol-3-phosphate acyltransferase</fullName>
        <shortName evidence="1">GPAT</shortName>
        <ecNumber evidence="1">2.3.1.15</ecNumber>
    </recommendedName>
</protein>
<keyword id="KW-0012">Acyltransferase</keyword>
<keyword id="KW-0997">Cell inner membrane</keyword>
<keyword id="KW-1003">Cell membrane</keyword>
<keyword id="KW-0444">Lipid biosynthesis</keyword>
<keyword id="KW-0443">Lipid metabolism</keyword>
<keyword id="KW-0472">Membrane</keyword>
<keyword id="KW-0594">Phospholipid biosynthesis</keyword>
<keyword id="KW-1208">Phospholipid metabolism</keyword>
<keyword id="KW-1185">Reference proteome</keyword>
<keyword id="KW-0808">Transferase</keyword>
<reference key="1">
    <citation type="journal article" date="2005" name="Proc. Natl. Acad. Sci. U.S.A.">
        <title>Complete genome sequence of Vibrio fischeri: a symbiotic bacterium with pathogenic congeners.</title>
        <authorList>
            <person name="Ruby E.G."/>
            <person name="Urbanowski M."/>
            <person name="Campbell J."/>
            <person name="Dunn A."/>
            <person name="Faini M."/>
            <person name="Gunsalus R."/>
            <person name="Lostroh P."/>
            <person name="Lupp C."/>
            <person name="McCann J."/>
            <person name="Millikan D."/>
            <person name="Schaefer A."/>
            <person name="Stabb E."/>
            <person name="Stevens A."/>
            <person name="Visick K."/>
            <person name="Whistler C."/>
            <person name="Greenberg E.P."/>
        </authorList>
    </citation>
    <scope>NUCLEOTIDE SEQUENCE [LARGE SCALE GENOMIC DNA]</scope>
    <source>
        <strain>ATCC 700601 / ES114</strain>
    </source>
</reference>